<comment type="function">
    <text evidence="1">Converts 2C-methyl-D-erythritol 2,4-cyclodiphosphate (ME-2,4cPP) into 1-hydroxy-2-methyl-2-(E)-butenyl 4-diphosphate.</text>
</comment>
<comment type="catalytic activity">
    <reaction evidence="1">
        <text>(2E)-4-hydroxy-3-methylbut-2-enyl diphosphate + oxidized [flavodoxin] + H2O + 2 H(+) = 2-C-methyl-D-erythritol 2,4-cyclic diphosphate + reduced [flavodoxin]</text>
        <dbReference type="Rhea" id="RHEA:43604"/>
        <dbReference type="Rhea" id="RHEA-COMP:10622"/>
        <dbReference type="Rhea" id="RHEA-COMP:10623"/>
        <dbReference type="ChEBI" id="CHEBI:15377"/>
        <dbReference type="ChEBI" id="CHEBI:15378"/>
        <dbReference type="ChEBI" id="CHEBI:57618"/>
        <dbReference type="ChEBI" id="CHEBI:58210"/>
        <dbReference type="ChEBI" id="CHEBI:58483"/>
        <dbReference type="ChEBI" id="CHEBI:128753"/>
        <dbReference type="EC" id="1.17.7.3"/>
    </reaction>
</comment>
<comment type="cofactor">
    <cofactor evidence="1">
        <name>[4Fe-4S] cluster</name>
        <dbReference type="ChEBI" id="CHEBI:49883"/>
    </cofactor>
    <text evidence="1">Binds 1 [4Fe-4S] cluster.</text>
</comment>
<comment type="pathway">
    <text evidence="1">Isoprenoid biosynthesis; isopentenyl diphosphate biosynthesis via DXP pathway; isopentenyl diphosphate from 1-deoxy-D-xylulose 5-phosphate: step 5/6.</text>
</comment>
<comment type="similarity">
    <text evidence="1">Belongs to the IspG family.</text>
</comment>
<sequence>MNKPEIMTQTDIAGPAPRHQTTKVMVGNVAVGGGAPIVVQSMTNTDTADVESTVAQVAALARAGSEMVRITVDREEAAAAVPHIREQLDKRGITTPLIGDFHYIGHKLLTDYPACAEALAKYRINPGNVGFKDKRDTQFSTIIELANKYGKPVRIGANWGSLDQELLSKLMDENAASATPRDARAVTREAMVQSALLSAARAQELGMPKDRIILSAKVSAVQDLIAVYQDLAARSDYAIHLGLTEAGMGSKGIVASSAALGILLQQGIGDTIRISLTPEPGGDRTLEVQVAQELLQTMGFRTFVPLVAACPGCGRTTSTTFQELARSIQDFIREEMPAWKSKYPGVENLNVAVMGCIVNGPGESKHANIGISLPGTGEAPAAPVFVDGKKFRTLRGPTIAADFKALVIDYIDQRYGSGAKAPESVTAAE</sequence>
<gene>
    <name evidence="1" type="primary">ispG</name>
    <name type="ordered locus">BBta_7633</name>
</gene>
<accession>A5ETI5</accession>
<keyword id="KW-0004">4Fe-4S</keyword>
<keyword id="KW-0408">Iron</keyword>
<keyword id="KW-0411">Iron-sulfur</keyword>
<keyword id="KW-0414">Isoprene biosynthesis</keyword>
<keyword id="KW-0479">Metal-binding</keyword>
<keyword id="KW-0560">Oxidoreductase</keyword>
<keyword id="KW-1185">Reference proteome</keyword>
<protein>
    <recommendedName>
        <fullName evidence="1">4-hydroxy-3-methylbut-2-en-1-yl diphosphate synthase (flavodoxin)</fullName>
        <ecNumber evidence="1">1.17.7.3</ecNumber>
    </recommendedName>
    <alternativeName>
        <fullName evidence="1">1-hydroxy-2-methyl-2-(E)-butenyl 4-diphosphate synthase</fullName>
    </alternativeName>
</protein>
<proteinExistence type="inferred from homology"/>
<organism>
    <name type="scientific">Bradyrhizobium sp. (strain BTAi1 / ATCC BAA-1182)</name>
    <dbReference type="NCBI Taxonomy" id="288000"/>
    <lineage>
        <taxon>Bacteria</taxon>
        <taxon>Pseudomonadati</taxon>
        <taxon>Pseudomonadota</taxon>
        <taxon>Alphaproteobacteria</taxon>
        <taxon>Hyphomicrobiales</taxon>
        <taxon>Nitrobacteraceae</taxon>
        <taxon>Bradyrhizobium</taxon>
    </lineage>
</organism>
<name>ISPG_BRASB</name>
<dbReference type="EC" id="1.17.7.3" evidence="1"/>
<dbReference type="EMBL" id="CP000494">
    <property type="protein sequence ID" value="ABQ39479.1"/>
    <property type="molecule type" value="Genomic_DNA"/>
</dbReference>
<dbReference type="RefSeq" id="WP_012047370.1">
    <property type="nucleotide sequence ID" value="NC_009485.1"/>
</dbReference>
<dbReference type="SMR" id="A5ETI5"/>
<dbReference type="STRING" id="288000.BBta_7633"/>
<dbReference type="KEGG" id="bbt:BBta_7633"/>
<dbReference type="eggNOG" id="COG0821">
    <property type="taxonomic scope" value="Bacteria"/>
</dbReference>
<dbReference type="HOGENOM" id="CLU_042258_1_0_5"/>
<dbReference type="OrthoDB" id="9803214at2"/>
<dbReference type="UniPathway" id="UPA00056">
    <property type="reaction ID" value="UER00096"/>
</dbReference>
<dbReference type="Proteomes" id="UP000000246">
    <property type="component" value="Chromosome"/>
</dbReference>
<dbReference type="GO" id="GO:0051539">
    <property type="term" value="F:4 iron, 4 sulfur cluster binding"/>
    <property type="evidence" value="ECO:0007669"/>
    <property type="project" value="UniProtKB-UniRule"/>
</dbReference>
<dbReference type="GO" id="GO:0046429">
    <property type="term" value="F:4-hydroxy-3-methylbut-2-en-1-yl diphosphate synthase activity (ferredoxin)"/>
    <property type="evidence" value="ECO:0007669"/>
    <property type="project" value="UniProtKB-UniRule"/>
</dbReference>
<dbReference type="GO" id="GO:0141197">
    <property type="term" value="F:4-hydroxy-3-methylbut-2-enyl-diphosphate synthase activity (flavodoxin)"/>
    <property type="evidence" value="ECO:0007669"/>
    <property type="project" value="UniProtKB-EC"/>
</dbReference>
<dbReference type="GO" id="GO:0005506">
    <property type="term" value="F:iron ion binding"/>
    <property type="evidence" value="ECO:0007669"/>
    <property type="project" value="InterPro"/>
</dbReference>
<dbReference type="GO" id="GO:0019288">
    <property type="term" value="P:isopentenyl diphosphate biosynthetic process, methylerythritol 4-phosphate pathway"/>
    <property type="evidence" value="ECO:0007669"/>
    <property type="project" value="UniProtKB-UniRule"/>
</dbReference>
<dbReference type="GO" id="GO:0016114">
    <property type="term" value="P:terpenoid biosynthetic process"/>
    <property type="evidence" value="ECO:0007669"/>
    <property type="project" value="InterPro"/>
</dbReference>
<dbReference type="FunFam" id="3.20.20.20:FF:000001">
    <property type="entry name" value="4-hydroxy-3-methylbut-2-en-1-yl diphosphate synthase (flavodoxin)"/>
    <property type="match status" value="1"/>
</dbReference>
<dbReference type="FunFam" id="3.30.413.10:FF:000012">
    <property type="entry name" value="4-hydroxy-3-methylbut-2-en-1-yl diphosphate synthase (flavodoxin)"/>
    <property type="match status" value="1"/>
</dbReference>
<dbReference type="Gene3D" id="3.20.20.20">
    <property type="entry name" value="Dihydropteroate synthase-like"/>
    <property type="match status" value="1"/>
</dbReference>
<dbReference type="Gene3D" id="3.30.413.10">
    <property type="entry name" value="Sulfite Reductase Hemoprotein, domain 1"/>
    <property type="match status" value="1"/>
</dbReference>
<dbReference type="HAMAP" id="MF_00159">
    <property type="entry name" value="IspG"/>
    <property type="match status" value="1"/>
</dbReference>
<dbReference type="InterPro" id="IPR011005">
    <property type="entry name" value="Dihydropteroate_synth-like_sf"/>
</dbReference>
<dbReference type="InterPro" id="IPR016425">
    <property type="entry name" value="IspG_bac"/>
</dbReference>
<dbReference type="InterPro" id="IPR004588">
    <property type="entry name" value="IspG_bac-typ"/>
</dbReference>
<dbReference type="InterPro" id="IPR045854">
    <property type="entry name" value="NO2/SO3_Rdtase_4Fe4S_sf"/>
</dbReference>
<dbReference type="NCBIfam" id="TIGR00612">
    <property type="entry name" value="ispG_gcpE"/>
    <property type="match status" value="1"/>
</dbReference>
<dbReference type="NCBIfam" id="NF001540">
    <property type="entry name" value="PRK00366.1"/>
    <property type="match status" value="1"/>
</dbReference>
<dbReference type="PANTHER" id="PTHR30454">
    <property type="entry name" value="4-HYDROXY-3-METHYLBUT-2-EN-1-YL DIPHOSPHATE SYNTHASE"/>
    <property type="match status" value="1"/>
</dbReference>
<dbReference type="PANTHER" id="PTHR30454:SF0">
    <property type="entry name" value="4-HYDROXY-3-METHYLBUT-2-EN-1-YL DIPHOSPHATE SYNTHASE (FERREDOXIN), CHLOROPLASTIC"/>
    <property type="match status" value="1"/>
</dbReference>
<dbReference type="Pfam" id="PF04551">
    <property type="entry name" value="GcpE"/>
    <property type="match status" value="1"/>
</dbReference>
<dbReference type="PIRSF" id="PIRSF004640">
    <property type="entry name" value="IspG"/>
    <property type="match status" value="1"/>
</dbReference>
<evidence type="ECO:0000255" key="1">
    <source>
        <dbReference type="HAMAP-Rule" id="MF_00159"/>
    </source>
</evidence>
<reference key="1">
    <citation type="journal article" date="2007" name="Science">
        <title>Legumes symbioses: absence of nod genes in photosynthetic bradyrhizobia.</title>
        <authorList>
            <person name="Giraud E."/>
            <person name="Moulin L."/>
            <person name="Vallenet D."/>
            <person name="Barbe V."/>
            <person name="Cytryn E."/>
            <person name="Avarre J.-C."/>
            <person name="Jaubert M."/>
            <person name="Simon D."/>
            <person name="Cartieaux F."/>
            <person name="Prin Y."/>
            <person name="Bena G."/>
            <person name="Hannibal L."/>
            <person name="Fardoux J."/>
            <person name="Kojadinovic M."/>
            <person name="Vuillet L."/>
            <person name="Lajus A."/>
            <person name="Cruveiller S."/>
            <person name="Rouy Z."/>
            <person name="Mangenot S."/>
            <person name="Segurens B."/>
            <person name="Dossat C."/>
            <person name="Franck W.L."/>
            <person name="Chang W.-S."/>
            <person name="Saunders E."/>
            <person name="Bruce D."/>
            <person name="Richardson P."/>
            <person name="Normand P."/>
            <person name="Dreyfus B."/>
            <person name="Pignol D."/>
            <person name="Stacey G."/>
            <person name="Emerich D."/>
            <person name="Vermeglio A."/>
            <person name="Medigue C."/>
            <person name="Sadowsky M."/>
        </authorList>
    </citation>
    <scope>NUCLEOTIDE SEQUENCE [LARGE SCALE GENOMIC DNA]</scope>
    <source>
        <strain>BTAi1 / ATCC BAA-1182</strain>
    </source>
</reference>
<feature type="chain" id="PRO_1000011443" description="4-hydroxy-3-methylbut-2-en-1-yl diphosphate synthase (flavodoxin)">
    <location>
        <begin position="1"/>
        <end position="429"/>
    </location>
</feature>
<feature type="binding site" evidence="1">
    <location>
        <position position="310"/>
    </location>
    <ligand>
        <name>[4Fe-4S] cluster</name>
        <dbReference type="ChEBI" id="CHEBI:49883"/>
    </ligand>
</feature>
<feature type="binding site" evidence="1">
    <location>
        <position position="313"/>
    </location>
    <ligand>
        <name>[4Fe-4S] cluster</name>
        <dbReference type="ChEBI" id="CHEBI:49883"/>
    </ligand>
</feature>
<feature type="binding site" evidence="1">
    <location>
        <position position="356"/>
    </location>
    <ligand>
        <name>[4Fe-4S] cluster</name>
        <dbReference type="ChEBI" id="CHEBI:49883"/>
    </ligand>
</feature>
<feature type="binding site" evidence="1">
    <location>
        <position position="363"/>
    </location>
    <ligand>
        <name>[4Fe-4S] cluster</name>
        <dbReference type="ChEBI" id="CHEBI:49883"/>
    </ligand>
</feature>